<name>SLYX_RHOPS</name>
<feature type="chain" id="PRO_1000045731" description="Protein SlyX homolog">
    <location>
        <begin position="1"/>
        <end position="71"/>
    </location>
</feature>
<protein>
    <recommendedName>
        <fullName evidence="1">Protein SlyX homolog</fullName>
    </recommendedName>
</protein>
<evidence type="ECO:0000255" key="1">
    <source>
        <dbReference type="HAMAP-Rule" id="MF_00715"/>
    </source>
</evidence>
<proteinExistence type="inferred from homology"/>
<accession>Q131E0</accession>
<reference key="1">
    <citation type="submission" date="2006-03" db="EMBL/GenBank/DDBJ databases">
        <title>Complete sequence of Rhodopseudomonas palustris BisB5.</title>
        <authorList>
            <consortium name="US DOE Joint Genome Institute"/>
            <person name="Copeland A."/>
            <person name="Lucas S."/>
            <person name="Lapidus A."/>
            <person name="Barry K."/>
            <person name="Detter J.C."/>
            <person name="Glavina del Rio T."/>
            <person name="Hammon N."/>
            <person name="Israni S."/>
            <person name="Dalin E."/>
            <person name="Tice H."/>
            <person name="Pitluck S."/>
            <person name="Chain P."/>
            <person name="Malfatti S."/>
            <person name="Shin M."/>
            <person name="Vergez L."/>
            <person name="Schmutz J."/>
            <person name="Larimer F."/>
            <person name="Land M."/>
            <person name="Hauser L."/>
            <person name="Pelletier D.A."/>
            <person name="Kyrpides N."/>
            <person name="Lykidis A."/>
            <person name="Oda Y."/>
            <person name="Harwood C.S."/>
            <person name="Richardson P."/>
        </authorList>
    </citation>
    <scope>NUCLEOTIDE SEQUENCE [LARGE SCALE GENOMIC DNA]</scope>
    <source>
        <strain>BisB5</strain>
    </source>
</reference>
<sequence length="71" mass="8019">MANDGSLSDRIDALEMRLSYQDETIETLNQTVTAQWKQIDTLTRQIAALSERLQQAESSVATPANERPPHY</sequence>
<dbReference type="EMBL" id="CP000283">
    <property type="protein sequence ID" value="ABE41299.1"/>
    <property type="molecule type" value="Genomic_DNA"/>
</dbReference>
<dbReference type="SMR" id="Q131E0"/>
<dbReference type="STRING" id="316057.RPD_4080"/>
<dbReference type="KEGG" id="rpd:RPD_4080"/>
<dbReference type="eggNOG" id="COG2900">
    <property type="taxonomic scope" value="Bacteria"/>
</dbReference>
<dbReference type="HOGENOM" id="CLU_180796_5_3_5"/>
<dbReference type="BioCyc" id="RPAL316057:RPD_RS20515-MONOMER"/>
<dbReference type="Proteomes" id="UP000001818">
    <property type="component" value="Chromosome"/>
</dbReference>
<dbReference type="Gene3D" id="1.20.5.300">
    <property type="match status" value="1"/>
</dbReference>
<dbReference type="HAMAP" id="MF_00715">
    <property type="entry name" value="SlyX"/>
    <property type="match status" value="1"/>
</dbReference>
<dbReference type="InterPro" id="IPR007236">
    <property type="entry name" value="SlyX"/>
</dbReference>
<dbReference type="PANTHER" id="PTHR36508">
    <property type="entry name" value="PROTEIN SLYX"/>
    <property type="match status" value="1"/>
</dbReference>
<dbReference type="PANTHER" id="PTHR36508:SF1">
    <property type="entry name" value="PROTEIN SLYX"/>
    <property type="match status" value="1"/>
</dbReference>
<dbReference type="Pfam" id="PF04102">
    <property type="entry name" value="SlyX"/>
    <property type="match status" value="1"/>
</dbReference>
<comment type="similarity">
    <text evidence="1">Belongs to the SlyX family.</text>
</comment>
<gene>
    <name evidence="1" type="primary">slyX</name>
    <name type="ordered locus">RPD_4080</name>
</gene>
<organism>
    <name type="scientific">Rhodopseudomonas palustris (strain BisB5)</name>
    <dbReference type="NCBI Taxonomy" id="316057"/>
    <lineage>
        <taxon>Bacteria</taxon>
        <taxon>Pseudomonadati</taxon>
        <taxon>Pseudomonadota</taxon>
        <taxon>Alphaproteobacteria</taxon>
        <taxon>Hyphomicrobiales</taxon>
        <taxon>Nitrobacteraceae</taxon>
        <taxon>Rhodopseudomonas</taxon>
    </lineage>
</organism>